<keyword id="KW-0521">NADP</keyword>
<keyword id="KW-0560">Oxidoreductase</keyword>
<keyword id="KW-0627">Porphyrin biosynthesis</keyword>
<accession>Q2FG64</accession>
<reference key="1">
    <citation type="journal article" date="2006" name="Lancet">
        <title>Complete genome sequence of USA300, an epidemic clone of community-acquired meticillin-resistant Staphylococcus aureus.</title>
        <authorList>
            <person name="Diep B.A."/>
            <person name="Gill S.R."/>
            <person name="Chang R.F."/>
            <person name="Phan T.H."/>
            <person name="Chen J.H."/>
            <person name="Davidson M.G."/>
            <person name="Lin F."/>
            <person name="Lin J."/>
            <person name="Carleton H.A."/>
            <person name="Mongodin E.F."/>
            <person name="Sensabaugh G.F."/>
            <person name="Perdreau-Remington F."/>
        </authorList>
    </citation>
    <scope>NUCLEOTIDE SEQUENCE [LARGE SCALE GENOMIC DNA]</scope>
    <source>
        <strain>USA300</strain>
    </source>
</reference>
<proteinExistence type="inferred from homology"/>
<comment type="function">
    <text evidence="1">Catalyzes the NADPH-dependent reduction of glutamyl-tRNA(Glu) to glutamate 1-semialdehyde (GSA).</text>
</comment>
<comment type="catalytic activity">
    <reaction evidence="1">
        <text>(S)-4-amino-5-oxopentanoate + tRNA(Glu) + NADP(+) = L-glutamyl-tRNA(Glu) + NADPH + H(+)</text>
        <dbReference type="Rhea" id="RHEA:12344"/>
        <dbReference type="Rhea" id="RHEA-COMP:9663"/>
        <dbReference type="Rhea" id="RHEA-COMP:9680"/>
        <dbReference type="ChEBI" id="CHEBI:15378"/>
        <dbReference type="ChEBI" id="CHEBI:57501"/>
        <dbReference type="ChEBI" id="CHEBI:57783"/>
        <dbReference type="ChEBI" id="CHEBI:58349"/>
        <dbReference type="ChEBI" id="CHEBI:78442"/>
        <dbReference type="ChEBI" id="CHEBI:78520"/>
        <dbReference type="EC" id="1.2.1.70"/>
    </reaction>
</comment>
<comment type="pathway">
    <text evidence="1">Porphyrin-containing compound metabolism; protoporphyrin-IX biosynthesis; 5-aminolevulinate from L-glutamyl-tRNA(Glu): step 1/2.</text>
</comment>
<comment type="subunit">
    <text evidence="1">Homodimer.</text>
</comment>
<comment type="domain">
    <text evidence="1">Possesses an unusual extended V-shaped dimeric structure with each monomer consisting of three distinct domains arranged along a curved 'spinal' alpha-helix. The N-terminal catalytic domain specifically recognizes the glutamate moiety of the substrate. The second domain is the NADPH-binding domain, and the third C-terminal domain is responsible for dimerization.</text>
</comment>
<comment type="miscellaneous">
    <text evidence="1">During catalysis, the active site Cys acts as a nucleophile attacking the alpha-carbonyl group of tRNA-bound glutamate with the formation of a thioester intermediate between enzyme and glutamate, and the concomitant release of tRNA(Glu). The thioester intermediate is finally reduced by direct hydride transfer from NADPH, to form the product GSA.</text>
</comment>
<comment type="similarity">
    <text evidence="1">Belongs to the glutamyl-tRNA reductase family.</text>
</comment>
<sequence length="448" mass="50099">MHFIAISINHRTADVALREQVAFRDDALRIAHEDLYETKSILENVILSTCNRTEVYAVVDQIHTGRYYIQRFLARAFGFEVDDIKAMSEVKVGDEAVEHLLRVTSGLDSIVLGETQILGQIRDAFFLAQSTGTTGTIFNHLFKQAITFAKRAHNETDIADNAVSVSYAAVELAKKVFGKLKSKQAIIIGAGEMSELSLLNLLGSGITDITVVNRTIENAMKLAAKHQVKYDELSSLPNLLESADIVISSTSAQSYIITNEMIERIAENRKQDSLVLIDIAVPRDIEPGISAITNIFNYDVDDLKGLVDANLRERQLAAATISEQIPAEIHAHNEWISMLGVVPVIRALREKAMAIQAETMDSIDRKLPGLSERERKIISKHTKSIINQMLKDPIKQAKELSSDKKSNEKLELFQNIFDIEAECPHEQAKQQKESKVKEISARRIFSFE</sequence>
<dbReference type="EC" id="1.2.1.70" evidence="1"/>
<dbReference type="EMBL" id="CP000255">
    <property type="protein sequence ID" value="ABD21321.1"/>
    <property type="molecule type" value="Genomic_DNA"/>
</dbReference>
<dbReference type="RefSeq" id="WP_000545451.1">
    <property type="nucleotide sequence ID" value="NZ_CP027476.1"/>
</dbReference>
<dbReference type="SMR" id="Q2FG64"/>
<dbReference type="KEGG" id="saa:SAUSA300_1619"/>
<dbReference type="HOGENOM" id="CLU_035113_2_2_9"/>
<dbReference type="OMA" id="FAFKCAA"/>
<dbReference type="UniPathway" id="UPA00251">
    <property type="reaction ID" value="UER00316"/>
</dbReference>
<dbReference type="Proteomes" id="UP000001939">
    <property type="component" value="Chromosome"/>
</dbReference>
<dbReference type="GO" id="GO:0008883">
    <property type="term" value="F:glutamyl-tRNA reductase activity"/>
    <property type="evidence" value="ECO:0007669"/>
    <property type="project" value="UniProtKB-UniRule"/>
</dbReference>
<dbReference type="GO" id="GO:0050661">
    <property type="term" value="F:NADP binding"/>
    <property type="evidence" value="ECO:0007669"/>
    <property type="project" value="InterPro"/>
</dbReference>
<dbReference type="GO" id="GO:0006782">
    <property type="term" value="P:protoporphyrinogen IX biosynthetic process"/>
    <property type="evidence" value="ECO:0007669"/>
    <property type="project" value="UniProtKB-UniRule"/>
</dbReference>
<dbReference type="CDD" id="cd05213">
    <property type="entry name" value="NAD_bind_Glutamyl_tRNA_reduct"/>
    <property type="match status" value="1"/>
</dbReference>
<dbReference type="FunFam" id="3.30.460.30:FF:000001">
    <property type="entry name" value="Glutamyl-tRNA reductase"/>
    <property type="match status" value="1"/>
</dbReference>
<dbReference type="FunFam" id="3.40.50.720:FF:000031">
    <property type="entry name" value="Glutamyl-tRNA reductase"/>
    <property type="match status" value="1"/>
</dbReference>
<dbReference type="Gene3D" id="3.30.460.30">
    <property type="entry name" value="Glutamyl-tRNA reductase, N-terminal domain"/>
    <property type="match status" value="1"/>
</dbReference>
<dbReference type="Gene3D" id="3.40.50.720">
    <property type="entry name" value="NAD(P)-binding Rossmann-like Domain"/>
    <property type="match status" value="1"/>
</dbReference>
<dbReference type="HAMAP" id="MF_00087">
    <property type="entry name" value="Glu_tRNA_reductase"/>
    <property type="match status" value="1"/>
</dbReference>
<dbReference type="InterPro" id="IPR000343">
    <property type="entry name" value="4pyrrol_synth_GluRdtase"/>
</dbReference>
<dbReference type="InterPro" id="IPR015896">
    <property type="entry name" value="4pyrrol_synth_GluRdtase_dimer"/>
</dbReference>
<dbReference type="InterPro" id="IPR015895">
    <property type="entry name" value="4pyrrol_synth_GluRdtase_N"/>
</dbReference>
<dbReference type="InterPro" id="IPR018214">
    <property type="entry name" value="GluRdtase_CS"/>
</dbReference>
<dbReference type="InterPro" id="IPR036453">
    <property type="entry name" value="GluRdtase_dimer_dom_sf"/>
</dbReference>
<dbReference type="InterPro" id="IPR036343">
    <property type="entry name" value="GluRdtase_N_sf"/>
</dbReference>
<dbReference type="InterPro" id="IPR036291">
    <property type="entry name" value="NAD(P)-bd_dom_sf"/>
</dbReference>
<dbReference type="InterPro" id="IPR006151">
    <property type="entry name" value="Shikm_DH/Glu-tRNA_Rdtase"/>
</dbReference>
<dbReference type="NCBIfam" id="TIGR01035">
    <property type="entry name" value="hemA"/>
    <property type="match status" value="1"/>
</dbReference>
<dbReference type="PANTHER" id="PTHR43120">
    <property type="entry name" value="GLUTAMYL-TRNA REDUCTASE 1, CHLOROPLASTIC"/>
    <property type="match status" value="1"/>
</dbReference>
<dbReference type="PANTHER" id="PTHR43120:SF1">
    <property type="entry name" value="GLUTAMYL-TRNA REDUCTASE 1, CHLOROPLASTIC"/>
    <property type="match status" value="1"/>
</dbReference>
<dbReference type="Pfam" id="PF00745">
    <property type="entry name" value="GlutR_dimer"/>
    <property type="match status" value="1"/>
</dbReference>
<dbReference type="Pfam" id="PF05201">
    <property type="entry name" value="GlutR_N"/>
    <property type="match status" value="1"/>
</dbReference>
<dbReference type="Pfam" id="PF01488">
    <property type="entry name" value="Shikimate_DH"/>
    <property type="match status" value="1"/>
</dbReference>
<dbReference type="PIRSF" id="PIRSF000445">
    <property type="entry name" value="4pyrrol_synth_GluRdtase"/>
    <property type="match status" value="1"/>
</dbReference>
<dbReference type="SUPFAM" id="SSF69742">
    <property type="entry name" value="Glutamyl tRNA-reductase catalytic, N-terminal domain"/>
    <property type="match status" value="1"/>
</dbReference>
<dbReference type="SUPFAM" id="SSF69075">
    <property type="entry name" value="Glutamyl tRNA-reductase dimerization domain"/>
    <property type="match status" value="1"/>
</dbReference>
<dbReference type="SUPFAM" id="SSF51735">
    <property type="entry name" value="NAD(P)-binding Rossmann-fold domains"/>
    <property type="match status" value="1"/>
</dbReference>
<dbReference type="PROSITE" id="PS00747">
    <property type="entry name" value="GLUTR"/>
    <property type="match status" value="1"/>
</dbReference>
<feature type="chain" id="PRO_1000004701" description="Glutamyl-tRNA reductase">
    <location>
        <begin position="1"/>
        <end position="448"/>
    </location>
</feature>
<feature type="active site" description="Nucleophile" evidence="1">
    <location>
        <position position="50"/>
    </location>
</feature>
<feature type="binding site" evidence="1">
    <location>
        <begin position="49"/>
        <end position="52"/>
    </location>
    <ligand>
        <name>substrate</name>
    </ligand>
</feature>
<feature type="binding site" evidence="1">
    <location>
        <position position="109"/>
    </location>
    <ligand>
        <name>substrate</name>
    </ligand>
</feature>
<feature type="binding site" evidence="1">
    <location>
        <begin position="114"/>
        <end position="116"/>
    </location>
    <ligand>
        <name>substrate</name>
    </ligand>
</feature>
<feature type="binding site" evidence="1">
    <location>
        <position position="120"/>
    </location>
    <ligand>
        <name>substrate</name>
    </ligand>
</feature>
<feature type="binding site" evidence="1">
    <location>
        <begin position="189"/>
        <end position="194"/>
    </location>
    <ligand>
        <name>NADP(+)</name>
        <dbReference type="ChEBI" id="CHEBI:58349"/>
    </ligand>
</feature>
<feature type="site" description="Important for activity" evidence="1">
    <location>
        <position position="99"/>
    </location>
</feature>
<protein>
    <recommendedName>
        <fullName evidence="1">Glutamyl-tRNA reductase</fullName>
        <shortName evidence="1">GluTR</shortName>
        <ecNumber evidence="1">1.2.1.70</ecNumber>
    </recommendedName>
</protein>
<evidence type="ECO:0000255" key="1">
    <source>
        <dbReference type="HAMAP-Rule" id="MF_00087"/>
    </source>
</evidence>
<name>HEM1_STAA3</name>
<gene>
    <name evidence="1" type="primary">hemA</name>
    <name type="ordered locus">SAUSA300_1619</name>
</gene>
<organism>
    <name type="scientific">Staphylococcus aureus (strain USA300)</name>
    <dbReference type="NCBI Taxonomy" id="367830"/>
    <lineage>
        <taxon>Bacteria</taxon>
        <taxon>Bacillati</taxon>
        <taxon>Bacillota</taxon>
        <taxon>Bacilli</taxon>
        <taxon>Bacillales</taxon>
        <taxon>Staphylococcaceae</taxon>
        <taxon>Staphylococcus</taxon>
    </lineage>
</organism>